<organism>
    <name type="scientific">Encephalitozoon cuniculi (strain GB-M1)</name>
    <name type="common">Microsporidian parasite</name>
    <dbReference type="NCBI Taxonomy" id="284813"/>
    <lineage>
        <taxon>Eukaryota</taxon>
        <taxon>Fungi</taxon>
        <taxon>Fungi incertae sedis</taxon>
        <taxon>Microsporidia</taxon>
        <taxon>Unikaryonidae</taxon>
        <taxon>Encephalitozoon</taxon>
    </lineage>
</organism>
<feature type="chain" id="PRO_0000047827" description="Zinc finger C2H2 protein ECU03_0790">
    <location>
        <begin position="1"/>
        <end position="190"/>
    </location>
</feature>
<feature type="zinc finger region" description="C2H2-type 1" evidence="1">
    <location>
        <begin position="4"/>
        <end position="27"/>
    </location>
</feature>
<feature type="zinc finger region" description="C2H2-type 2" evidence="1">
    <location>
        <begin position="33"/>
        <end position="55"/>
    </location>
</feature>
<feature type="zinc finger region" description="C2H2-type 3" evidence="1">
    <location>
        <begin position="85"/>
        <end position="108"/>
    </location>
</feature>
<feature type="zinc finger region" description="C2H2-type 4" evidence="1">
    <location>
        <begin position="119"/>
        <end position="142"/>
    </location>
</feature>
<protein>
    <recommendedName>
        <fullName>Zinc finger C2H2 protein ECU03_0790</fullName>
    </recommendedName>
</protein>
<keyword id="KW-0479">Metal-binding</keyword>
<keyword id="KW-1185">Reference proteome</keyword>
<keyword id="KW-0677">Repeat</keyword>
<keyword id="KW-0862">Zinc</keyword>
<keyword id="KW-0863">Zinc-finger</keyword>
<reference key="1">
    <citation type="journal article" date="2001" name="Nature">
        <title>Genome sequence and gene compaction of the eukaryote parasite Encephalitozoon cuniculi.</title>
        <authorList>
            <person name="Katinka M.D."/>
            <person name="Duprat S."/>
            <person name="Cornillot E."/>
            <person name="Metenier G."/>
            <person name="Thomarat F."/>
            <person name="Prensier G."/>
            <person name="Barbe V."/>
            <person name="Peyretaillade E."/>
            <person name="Brottier P."/>
            <person name="Wincker P."/>
            <person name="Delbac F."/>
            <person name="El Alaoui H."/>
            <person name="Peyret P."/>
            <person name="Saurin W."/>
            <person name="Gouy M."/>
            <person name="Weissenbach J."/>
            <person name="Vivares C.P."/>
        </authorList>
    </citation>
    <scope>NUCLEOTIDE SEQUENCE [LARGE SCALE GENOMIC DNA]</scope>
    <source>
        <strain>GB-M1</strain>
    </source>
</reference>
<dbReference type="EMBL" id="AL590443">
    <property type="protein sequence ID" value="CAD26223.1"/>
    <property type="molecule type" value="Genomic_DNA"/>
</dbReference>
<dbReference type="RefSeq" id="NP_597588.1">
    <property type="nucleotide sequence ID" value="NM_001040952.1"/>
</dbReference>
<dbReference type="SMR" id="Q8SW43"/>
<dbReference type="STRING" id="284813.Q8SW43"/>
<dbReference type="GeneID" id="858750"/>
<dbReference type="KEGG" id="ecu:ECU03_0790"/>
<dbReference type="VEuPathDB" id="MicrosporidiaDB:ECU03_0790"/>
<dbReference type="HOGENOM" id="CLU_002678_2_1_1"/>
<dbReference type="InParanoid" id="Q8SW43"/>
<dbReference type="OMA" id="HEMKSYE"/>
<dbReference type="OrthoDB" id="2188412at2759"/>
<dbReference type="Proteomes" id="UP000000819">
    <property type="component" value="Chromosome III"/>
</dbReference>
<dbReference type="GO" id="GO:0005634">
    <property type="term" value="C:nucleus"/>
    <property type="evidence" value="ECO:0007669"/>
    <property type="project" value="TreeGrafter"/>
</dbReference>
<dbReference type="GO" id="GO:0000981">
    <property type="term" value="F:DNA-binding transcription factor activity, RNA polymerase II-specific"/>
    <property type="evidence" value="ECO:0007669"/>
    <property type="project" value="TreeGrafter"/>
</dbReference>
<dbReference type="GO" id="GO:0000977">
    <property type="term" value="F:RNA polymerase II transcription regulatory region sequence-specific DNA binding"/>
    <property type="evidence" value="ECO:0007669"/>
    <property type="project" value="TreeGrafter"/>
</dbReference>
<dbReference type="GO" id="GO:0008270">
    <property type="term" value="F:zinc ion binding"/>
    <property type="evidence" value="ECO:0007669"/>
    <property type="project" value="UniProtKB-KW"/>
</dbReference>
<dbReference type="FunFam" id="3.30.160.60:FF:001049">
    <property type="entry name" value="zinc finger protein 319"/>
    <property type="match status" value="1"/>
</dbReference>
<dbReference type="Gene3D" id="3.30.160.60">
    <property type="entry name" value="Classic Zinc Finger"/>
    <property type="match status" value="4"/>
</dbReference>
<dbReference type="InterPro" id="IPR036236">
    <property type="entry name" value="Znf_C2H2_sf"/>
</dbReference>
<dbReference type="InterPro" id="IPR013087">
    <property type="entry name" value="Znf_C2H2_type"/>
</dbReference>
<dbReference type="PANTHER" id="PTHR24409">
    <property type="entry name" value="ZINC FINGER PROTEIN 142"/>
    <property type="match status" value="1"/>
</dbReference>
<dbReference type="PANTHER" id="PTHR24409:SF424">
    <property type="entry name" value="ZINC FINGER PROTEIN INDRA"/>
    <property type="match status" value="1"/>
</dbReference>
<dbReference type="Pfam" id="PF00096">
    <property type="entry name" value="zf-C2H2"/>
    <property type="match status" value="4"/>
</dbReference>
<dbReference type="SMART" id="SM00355">
    <property type="entry name" value="ZnF_C2H2"/>
    <property type="match status" value="5"/>
</dbReference>
<dbReference type="SUPFAM" id="SSF57667">
    <property type="entry name" value="beta-beta-alpha zinc fingers"/>
    <property type="match status" value="2"/>
</dbReference>
<dbReference type="PROSITE" id="PS00028">
    <property type="entry name" value="ZINC_FINGER_C2H2_1"/>
    <property type="match status" value="4"/>
</dbReference>
<dbReference type="PROSITE" id="PS50157">
    <property type="entry name" value="ZINC_FINGER_C2H2_2"/>
    <property type="match status" value="4"/>
</dbReference>
<evidence type="ECO:0000255" key="1">
    <source>
        <dbReference type="PROSITE-ProRule" id="PRU00042"/>
    </source>
</evidence>
<sequence>MIFRCCFEGCGKSFPRRAKLSDHLNTHTRSRPYKCDMCEKSYMKNGHLSVHKKKHFPPELACERCGYMCHTRDRLHKHQKACLEYKCGICGKRYRKRSWFDVHVESHHVKVFNAPRSKHVCEYCKFEFNKKSNLSTHVRSVHLLMKPFKCPCGKEYAHNASLDRHRKKCASWSYPGLDVAKPPAASNSLL</sequence>
<proteinExistence type="predicted"/>
<gene>
    <name type="ordered locus">ECU03_0790</name>
</gene>
<name>Z379_ENCCU</name>
<accession>Q8SW43</accession>